<keyword id="KW-0903">Direct protein sequencing</keyword>
<keyword id="KW-1015">Disulfide bond</keyword>
<keyword id="KW-0646">Protease inhibitor</keyword>
<keyword id="KW-0722">Serine protease inhibitor</keyword>
<evidence type="ECO:0000250" key="1"/>
<evidence type="ECO:0000250" key="2">
    <source>
        <dbReference type="UniProtKB" id="P80321"/>
    </source>
</evidence>
<evidence type="ECO:0000305" key="3"/>
<feature type="chain" id="PRO_0000105841" description="Bowman-Birk type proteinase inhibitor DE-3">
    <location>
        <begin position="1"/>
        <end position="76"/>
    </location>
</feature>
<feature type="site" description="Reactive bond for trypsin" evidence="1">
    <location>
        <begin position="24"/>
        <end position="25"/>
    </location>
</feature>
<feature type="site" description="Reactive bond for chymotrypsin" evidence="1">
    <location>
        <begin position="51"/>
        <end position="52"/>
    </location>
</feature>
<feature type="disulfide bond" evidence="2">
    <location>
        <begin position="16"/>
        <end position="70"/>
    </location>
</feature>
<feature type="disulfide bond" evidence="2">
    <location>
        <begin position="17"/>
        <end position="32"/>
    </location>
</feature>
<feature type="disulfide bond" evidence="2">
    <location>
        <begin position="20"/>
        <end position="66"/>
    </location>
</feature>
<feature type="disulfide bond" evidence="2">
    <location>
        <begin position="22"/>
        <end position="30"/>
    </location>
</feature>
<feature type="disulfide bond" evidence="2">
    <location>
        <begin position="40"/>
        <end position="47"/>
    </location>
</feature>
<feature type="disulfide bond" evidence="2">
    <location>
        <begin position="44"/>
        <end position="59"/>
    </location>
</feature>
<feature type="disulfide bond" evidence="2">
    <location>
        <begin position="49"/>
        <end position="57"/>
    </location>
</feature>
<dbReference type="PIR" id="A01296">
    <property type="entry name" value="TIAM3"/>
</dbReference>
<dbReference type="SMR" id="P01057"/>
<dbReference type="MEROPS" id="I12.001"/>
<dbReference type="TCDB" id="8.A.77.3.1">
    <property type="family name" value="the sheddase (sheddase) family"/>
</dbReference>
<dbReference type="GO" id="GO:0005576">
    <property type="term" value="C:extracellular region"/>
    <property type="evidence" value="ECO:0007669"/>
    <property type="project" value="InterPro"/>
</dbReference>
<dbReference type="GO" id="GO:0004867">
    <property type="term" value="F:serine-type endopeptidase inhibitor activity"/>
    <property type="evidence" value="ECO:0007669"/>
    <property type="project" value="UniProtKB-KW"/>
</dbReference>
<dbReference type="CDD" id="cd00023">
    <property type="entry name" value="BBI"/>
    <property type="match status" value="1"/>
</dbReference>
<dbReference type="FunFam" id="2.10.69.10:FF:000001">
    <property type="entry name" value="Bowman-Birk type proteinase inhibitor"/>
    <property type="match status" value="1"/>
</dbReference>
<dbReference type="Gene3D" id="2.10.69.10">
    <property type="entry name" value="Cysteine Protease (Bromelain) Inhibitor, subunit H"/>
    <property type="match status" value="1"/>
</dbReference>
<dbReference type="InterPro" id="IPR035995">
    <property type="entry name" value="Bowman-Birk_prot_inh"/>
</dbReference>
<dbReference type="InterPro" id="IPR000877">
    <property type="entry name" value="Prot_inh_BBI"/>
</dbReference>
<dbReference type="Pfam" id="PF00228">
    <property type="entry name" value="Bowman-Birk_leg"/>
    <property type="match status" value="2"/>
</dbReference>
<dbReference type="SMART" id="SM00269">
    <property type="entry name" value="BowB"/>
    <property type="match status" value="1"/>
</dbReference>
<dbReference type="SUPFAM" id="SSF57247">
    <property type="entry name" value="Bowman-Birk inhibitor, BBI"/>
    <property type="match status" value="1"/>
</dbReference>
<dbReference type="PROSITE" id="PS00281">
    <property type="entry name" value="BOWMAN_BIRK"/>
    <property type="match status" value="1"/>
</dbReference>
<organism>
    <name type="scientific">Macrotyloma axillare</name>
    <name type="common">Perennial horse gram</name>
    <name type="synonym">Dolichos axillaris</name>
    <dbReference type="NCBI Taxonomy" id="3876"/>
    <lineage>
        <taxon>Eukaryota</taxon>
        <taxon>Viridiplantae</taxon>
        <taxon>Streptophyta</taxon>
        <taxon>Embryophyta</taxon>
        <taxon>Tracheophyta</taxon>
        <taxon>Spermatophyta</taxon>
        <taxon>Magnoliopsida</taxon>
        <taxon>eudicotyledons</taxon>
        <taxon>Gunneridae</taxon>
        <taxon>Pentapetalae</taxon>
        <taxon>rosids</taxon>
        <taxon>fabids</taxon>
        <taxon>Fabales</taxon>
        <taxon>Fabaceae</taxon>
        <taxon>Papilionoideae</taxon>
        <taxon>50 kb inversion clade</taxon>
        <taxon>NPAAA clade</taxon>
        <taxon>indigoferoid/millettioid clade</taxon>
        <taxon>Phaseoleae</taxon>
        <taxon>Macrotyloma</taxon>
    </lineage>
</organism>
<protein>
    <recommendedName>
        <fullName>Bowman-Birk type proteinase inhibitor DE-3</fullName>
    </recommendedName>
</protein>
<proteinExistence type="evidence at protein level"/>
<accession>P01057</accession>
<comment type="similarity">
    <text evidence="3">Belongs to the Bowman-Birk serine protease inhibitor family.</text>
</comment>
<reference key="1">
    <citation type="journal article" date="1979" name="Eur. J. Biochem.">
        <title>Purification, some properties and the complete primary structures of two protease inhibitors (DE-3 and DE-4) from Macrotyloma axillare seed.</title>
        <authorList>
            <person name="Joubert F.J."/>
            <person name="Kruger H."/>
            <person name="Townshend G.S."/>
            <person name="Botes D.P."/>
        </authorList>
    </citation>
    <scope>PROTEIN SEQUENCE</scope>
</reference>
<sequence>DHHHSTDEPSESSKPCCDECACTKSIPPQCRCTDVRLNSCHSACSSCVCTFSIPAQCVCVDMKDFCYAPCKSSHDD</sequence>
<name>IBB3_MACAX</name>